<sequence length="676" mass="76617">MAKRKLNETDEPSVVTEPQTQKKTKKSSTEKKEKKEKKSKSQSVKPQEEKPEATQQQAQQQTEEEQELEQQLKDEQKQQDEKDEKKQSEKDDADLTFSDLGLDPRLVQAVAKQSFEKPTLVQRKAIPLALAGQDVLCKAKTGSGKTAAYVLPVLSGILKRKATDPTPFTSALILVPTRELADQVHKAIDAFSAFCTKDIQSAKLTDNVSDAVLRSLLANAPDVIVSTPARAWHNIESGALSVAKLQYLVLDEADLVLSYGYDEDMENIARSLPKGGVQTTMMSATLVSDELDTLKGFFCRNPTMLDLKEEFSNEDEKLTQFYVKCGEDDKWLISYLIFKLQLIKGPCLVFVADIDRAYRLKLFFEQFSIRSCVLNSELPINTRIKIIEEFNRGIYDIIIASDERSEVFLEDEKTEEKKEEQGEKKEGDEKKNGKGKKKKGRRDQEYGVSRGIDFKNVAAVINFDMPTSSSSYIHRIGRTARAGRAGIALSMVVPHDLFGKHKPTSIKQCEKDEKVLAKVMRQQAKLNRKLEPYNFNKDQMEAFRYRMNDALRAVTKVAIREARTRELRQELLRSETLKRYFEENPHELSHLRHDGELGTKMRQQAHLKHVPDYLLPQDGKNALTETQIGFVPFKKQGDDKKTRGKKGAKGGKGGHGKYKKGPGGRKNVLKTFRVRK</sequence>
<feature type="chain" id="PRO_0000232344" description="ATP-dependent RNA helicase dbp-9">
    <location>
        <begin position="1"/>
        <end position="676"/>
    </location>
</feature>
<feature type="domain" description="Helicase ATP-binding" evidence="2">
    <location>
        <begin position="126"/>
        <end position="304"/>
    </location>
</feature>
<feature type="domain" description="Helicase C-terminal" evidence="3">
    <location>
        <begin position="317"/>
        <end position="541"/>
    </location>
</feature>
<feature type="region of interest" description="Disordered" evidence="4">
    <location>
        <begin position="1"/>
        <end position="97"/>
    </location>
</feature>
<feature type="region of interest" description="Disordered" evidence="4">
    <location>
        <begin position="410"/>
        <end position="444"/>
    </location>
</feature>
<feature type="region of interest" description="Disordered" evidence="4">
    <location>
        <begin position="633"/>
        <end position="676"/>
    </location>
</feature>
<feature type="short sequence motif" description="Q motif">
    <location>
        <begin position="95"/>
        <end position="123"/>
    </location>
</feature>
<feature type="short sequence motif" description="DEAD box">
    <location>
        <begin position="251"/>
        <end position="254"/>
    </location>
</feature>
<feature type="compositionally biased region" description="Basic and acidic residues" evidence="4">
    <location>
        <begin position="70"/>
        <end position="90"/>
    </location>
</feature>
<feature type="compositionally biased region" description="Basic and acidic residues" evidence="4">
    <location>
        <begin position="410"/>
        <end position="432"/>
    </location>
</feature>
<feature type="compositionally biased region" description="Basic residues" evidence="4">
    <location>
        <begin position="642"/>
        <end position="663"/>
    </location>
</feature>
<feature type="binding site" evidence="2">
    <location>
        <begin position="139"/>
        <end position="146"/>
    </location>
    <ligand>
        <name>ATP</name>
        <dbReference type="ChEBI" id="CHEBI:30616"/>
    </ligand>
</feature>
<dbReference type="EC" id="3.6.4.13"/>
<dbReference type="EMBL" id="CM002241">
    <property type="protein sequence ID" value="EAA31099.1"/>
    <property type="molecule type" value="Genomic_DNA"/>
</dbReference>
<dbReference type="RefSeq" id="XP_960335.1">
    <property type="nucleotide sequence ID" value="XM_955242.2"/>
</dbReference>
<dbReference type="SMR" id="Q7S6F3"/>
<dbReference type="FunCoup" id="Q7S6F3">
    <property type="interactions" value="936"/>
</dbReference>
<dbReference type="STRING" id="367110.Q7S6F3"/>
<dbReference type="PaxDb" id="5141-EFNCRP00000006969"/>
<dbReference type="EnsemblFungi" id="EAA31099">
    <property type="protein sequence ID" value="EAA31099"/>
    <property type="gene ID" value="NCU07070"/>
</dbReference>
<dbReference type="GeneID" id="3876484"/>
<dbReference type="KEGG" id="ncr:NCU07070"/>
<dbReference type="VEuPathDB" id="FungiDB:NCU07070"/>
<dbReference type="HOGENOM" id="CLU_003041_17_1_1"/>
<dbReference type="InParanoid" id="Q7S6F3"/>
<dbReference type="OMA" id="SRCHVIN"/>
<dbReference type="OrthoDB" id="1191041at2759"/>
<dbReference type="Proteomes" id="UP000001805">
    <property type="component" value="Chromosome 5, Linkage Group VI"/>
</dbReference>
<dbReference type="GO" id="GO:0005730">
    <property type="term" value="C:nucleolus"/>
    <property type="evidence" value="ECO:0000318"/>
    <property type="project" value="GO_Central"/>
</dbReference>
<dbReference type="GO" id="GO:0005524">
    <property type="term" value="F:ATP binding"/>
    <property type="evidence" value="ECO:0007669"/>
    <property type="project" value="UniProtKB-KW"/>
</dbReference>
<dbReference type="GO" id="GO:0016887">
    <property type="term" value="F:ATP hydrolysis activity"/>
    <property type="evidence" value="ECO:0007669"/>
    <property type="project" value="RHEA"/>
</dbReference>
<dbReference type="GO" id="GO:0003678">
    <property type="term" value="F:DNA helicase activity"/>
    <property type="evidence" value="ECO:0007669"/>
    <property type="project" value="EnsemblFungi"/>
</dbReference>
<dbReference type="GO" id="GO:0033677">
    <property type="term" value="F:DNA/RNA helicase activity"/>
    <property type="evidence" value="ECO:0007669"/>
    <property type="project" value="EnsemblFungi"/>
</dbReference>
<dbReference type="GO" id="GO:0003723">
    <property type="term" value="F:RNA binding"/>
    <property type="evidence" value="ECO:0007669"/>
    <property type="project" value="UniProtKB-KW"/>
</dbReference>
<dbReference type="GO" id="GO:0003724">
    <property type="term" value="F:RNA helicase activity"/>
    <property type="evidence" value="ECO:0007669"/>
    <property type="project" value="UniProtKB-EC"/>
</dbReference>
<dbReference type="GO" id="GO:0000463">
    <property type="term" value="P:maturation of LSU-rRNA from tricistronic rRNA transcript (SSU-rRNA, 5.8S rRNA, LSU-rRNA)"/>
    <property type="evidence" value="ECO:0007669"/>
    <property type="project" value="EnsemblFungi"/>
</dbReference>
<dbReference type="CDD" id="cd17961">
    <property type="entry name" value="DEADc_DDX56"/>
    <property type="match status" value="1"/>
</dbReference>
<dbReference type="CDD" id="cd18787">
    <property type="entry name" value="SF2_C_DEAD"/>
    <property type="match status" value="1"/>
</dbReference>
<dbReference type="Gene3D" id="3.40.50.300">
    <property type="entry name" value="P-loop containing nucleotide triphosphate hydrolases"/>
    <property type="match status" value="2"/>
</dbReference>
<dbReference type="InterPro" id="IPR011545">
    <property type="entry name" value="DEAD/DEAH_box_helicase_dom"/>
</dbReference>
<dbReference type="InterPro" id="IPR050079">
    <property type="entry name" value="DEAD_box_RNA_helicase"/>
</dbReference>
<dbReference type="InterPro" id="IPR014001">
    <property type="entry name" value="Helicase_ATP-bd"/>
</dbReference>
<dbReference type="InterPro" id="IPR001650">
    <property type="entry name" value="Helicase_C-like"/>
</dbReference>
<dbReference type="InterPro" id="IPR027417">
    <property type="entry name" value="P-loop_NTPase"/>
</dbReference>
<dbReference type="InterPro" id="IPR014014">
    <property type="entry name" value="RNA_helicase_DEAD_Q_motif"/>
</dbReference>
<dbReference type="PANTHER" id="PTHR47959">
    <property type="entry name" value="ATP-DEPENDENT RNA HELICASE RHLE-RELATED"/>
    <property type="match status" value="1"/>
</dbReference>
<dbReference type="PANTHER" id="PTHR47959:SF21">
    <property type="entry name" value="DEAD-BOX HELICASE 56"/>
    <property type="match status" value="1"/>
</dbReference>
<dbReference type="Pfam" id="PF00270">
    <property type="entry name" value="DEAD"/>
    <property type="match status" value="1"/>
</dbReference>
<dbReference type="Pfam" id="PF00271">
    <property type="entry name" value="Helicase_C"/>
    <property type="match status" value="2"/>
</dbReference>
<dbReference type="SMART" id="SM00487">
    <property type="entry name" value="DEXDc"/>
    <property type="match status" value="1"/>
</dbReference>
<dbReference type="SMART" id="SM00490">
    <property type="entry name" value="HELICc"/>
    <property type="match status" value="1"/>
</dbReference>
<dbReference type="SUPFAM" id="SSF52540">
    <property type="entry name" value="P-loop containing nucleoside triphosphate hydrolases"/>
    <property type="match status" value="2"/>
</dbReference>
<dbReference type="PROSITE" id="PS51192">
    <property type="entry name" value="HELICASE_ATP_BIND_1"/>
    <property type="match status" value="1"/>
</dbReference>
<dbReference type="PROSITE" id="PS51194">
    <property type="entry name" value="HELICASE_CTER"/>
    <property type="match status" value="1"/>
</dbReference>
<dbReference type="PROSITE" id="PS51195">
    <property type="entry name" value="Q_MOTIF"/>
    <property type="match status" value="1"/>
</dbReference>
<evidence type="ECO:0000250" key="1"/>
<evidence type="ECO:0000255" key="2">
    <source>
        <dbReference type="PROSITE-ProRule" id="PRU00541"/>
    </source>
</evidence>
<evidence type="ECO:0000255" key="3">
    <source>
        <dbReference type="PROSITE-ProRule" id="PRU00542"/>
    </source>
</evidence>
<evidence type="ECO:0000256" key="4">
    <source>
        <dbReference type="SAM" id="MobiDB-lite"/>
    </source>
</evidence>
<evidence type="ECO:0000305" key="5"/>
<reference key="1">
    <citation type="journal article" date="2003" name="Nature">
        <title>The genome sequence of the filamentous fungus Neurospora crassa.</title>
        <authorList>
            <person name="Galagan J.E."/>
            <person name="Calvo S.E."/>
            <person name="Borkovich K.A."/>
            <person name="Selker E.U."/>
            <person name="Read N.D."/>
            <person name="Jaffe D.B."/>
            <person name="FitzHugh W."/>
            <person name="Ma L.-J."/>
            <person name="Smirnov S."/>
            <person name="Purcell S."/>
            <person name="Rehman B."/>
            <person name="Elkins T."/>
            <person name="Engels R."/>
            <person name="Wang S."/>
            <person name="Nielsen C.B."/>
            <person name="Butler J."/>
            <person name="Endrizzi M."/>
            <person name="Qui D."/>
            <person name="Ianakiev P."/>
            <person name="Bell-Pedersen D."/>
            <person name="Nelson M.A."/>
            <person name="Werner-Washburne M."/>
            <person name="Selitrennikoff C.P."/>
            <person name="Kinsey J.A."/>
            <person name="Braun E.L."/>
            <person name="Zelter A."/>
            <person name="Schulte U."/>
            <person name="Kothe G.O."/>
            <person name="Jedd G."/>
            <person name="Mewes H.-W."/>
            <person name="Staben C."/>
            <person name="Marcotte E."/>
            <person name="Greenberg D."/>
            <person name="Roy A."/>
            <person name="Foley K."/>
            <person name="Naylor J."/>
            <person name="Stange-Thomann N."/>
            <person name="Barrett R."/>
            <person name="Gnerre S."/>
            <person name="Kamal M."/>
            <person name="Kamvysselis M."/>
            <person name="Mauceli E.W."/>
            <person name="Bielke C."/>
            <person name="Rudd S."/>
            <person name="Frishman D."/>
            <person name="Krystofova S."/>
            <person name="Rasmussen C."/>
            <person name="Metzenberg R.L."/>
            <person name="Perkins D.D."/>
            <person name="Kroken S."/>
            <person name="Cogoni C."/>
            <person name="Macino G."/>
            <person name="Catcheside D.E.A."/>
            <person name="Li W."/>
            <person name="Pratt R.J."/>
            <person name="Osmani S.A."/>
            <person name="DeSouza C.P.C."/>
            <person name="Glass N.L."/>
            <person name="Orbach M.J."/>
            <person name="Berglund J.A."/>
            <person name="Voelker R."/>
            <person name="Yarden O."/>
            <person name="Plamann M."/>
            <person name="Seiler S."/>
            <person name="Dunlap J.C."/>
            <person name="Radford A."/>
            <person name="Aramayo R."/>
            <person name="Natvig D.O."/>
            <person name="Alex L.A."/>
            <person name="Mannhaupt G."/>
            <person name="Ebbole D.J."/>
            <person name="Freitag M."/>
            <person name="Paulsen I."/>
            <person name="Sachs M.S."/>
            <person name="Lander E.S."/>
            <person name="Nusbaum C."/>
            <person name="Birren B.W."/>
        </authorList>
    </citation>
    <scope>NUCLEOTIDE SEQUENCE [LARGE SCALE GENOMIC DNA]</scope>
    <source>
        <strain>ATCC 24698 / 74-OR23-1A / CBS 708.71 / DSM 1257 / FGSC 987</strain>
    </source>
</reference>
<comment type="function">
    <text evidence="1">ATP-binding RNA helicase involved in the biogenesis of 60S ribosomal subunits and is required for the normal formation of 25S and 5.8S rRNAs.</text>
</comment>
<comment type="catalytic activity">
    <reaction>
        <text>ATP + H2O = ADP + phosphate + H(+)</text>
        <dbReference type="Rhea" id="RHEA:13065"/>
        <dbReference type="ChEBI" id="CHEBI:15377"/>
        <dbReference type="ChEBI" id="CHEBI:15378"/>
        <dbReference type="ChEBI" id="CHEBI:30616"/>
        <dbReference type="ChEBI" id="CHEBI:43474"/>
        <dbReference type="ChEBI" id="CHEBI:456216"/>
        <dbReference type="EC" id="3.6.4.13"/>
    </reaction>
</comment>
<comment type="subcellular location">
    <subcellularLocation>
        <location evidence="1">Nucleus</location>
        <location evidence="1">Nucleolus</location>
    </subcellularLocation>
</comment>
<comment type="domain">
    <text>The Q motif is unique to and characteristic of the DEAD box family of RNA helicases and controls ATP binding and hydrolysis.</text>
</comment>
<comment type="similarity">
    <text evidence="5">Belongs to the DEAD box helicase family. DDX56/DBP9 subfamily.</text>
</comment>
<gene>
    <name type="primary">dbp-9</name>
    <name type="ORF">NCU07070</name>
</gene>
<proteinExistence type="inferred from homology"/>
<protein>
    <recommendedName>
        <fullName>ATP-dependent RNA helicase dbp-9</fullName>
        <ecNumber>3.6.4.13</ecNumber>
    </recommendedName>
</protein>
<keyword id="KW-0067">ATP-binding</keyword>
<keyword id="KW-0347">Helicase</keyword>
<keyword id="KW-0378">Hydrolase</keyword>
<keyword id="KW-0547">Nucleotide-binding</keyword>
<keyword id="KW-0539">Nucleus</keyword>
<keyword id="KW-1185">Reference proteome</keyword>
<keyword id="KW-0690">Ribosome biogenesis</keyword>
<keyword id="KW-0694">RNA-binding</keyword>
<keyword id="KW-0698">rRNA processing</keyword>
<accession>Q7S6F3</accession>
<name>DBP9_NEUCR</name>
<organism>
    <name type="scientific">Neurospora crassa (strain ATCC 24698 / 74-OR23-1A / CBS 708.71 / DSM 1257 / FGSC 987)</name>
    <dbReference type="NCBI Taxonomy" id="367110"/>
    <lineage>
        <taxon>Eukaryota</taxon>
        <taxon>Fungi</taxon>
        <taxon>Dikarya</taxon>
        <taxon>Ascomycota</taxon>
        <taxon>Pezizomycotina</taxon>
        <taxon>Sordariomycetes</taxon>
        <taxon>Sordariomycetidae</taxon>
        <taxon>Sordariales</taxon>
        <taxon>Sordariaceae</taxon>
        <taxon>Neurospora</taxon>
    </lineage>
</organism>